<evidence type="ECO:0000255" key="1">
    <source>
        <dbReference type="HAMAP-Rule" id="MF_01365"/>
    </source>
</evidence>
<evidence type="ECO:0000305" key="2"/>
<keyword id="KW-1185">Reference proteome</keyword>
<keyword id="KW-0687">Ribonucleoprotein</keyword>
<keyword id="KW-0689">Ribosomal protein</keyword>
<keyword id="KW-0694">RNA-binding</keyword>
<keyword id="KW-0699">rRNA-binding</keyword>
<accession>A1KB12</accession>
<proteinExistence type="inferred from homology"/>
<comment type="function">
    <text evidence="1">This protein binds to the 23S rRNA, and is important in its secondary structure. It is located near the subunit interface in the base of the L7/L12 stalk, and near the tRNA binding site of the peptidyltransferase center.</text>
</comment>
<comment type="subunit">
    <text evidence="1">Part of the 50S ribosomal subunit.</text>
</comment>
<comment type="similarity">
    <text evidence="1">Belongs to the universal ribosomal protein uL6 family.</text>
</comment>
<sequence>MSRVAKNPVVIPKGVEVSISAAEIAIKGPLGTLVRPQHPAVTVEQDGEALVCKARDGQVNARAMSGTVRALLNNMVVGVSKGFERKLLLVGVGYRAQAQGDKLNLSLGFSHPVVHQMPAGVKVETPSQTEIVIKGVDKQQVGQVAAEVRAYRAPEPYKGKGVRYSDEVVVLKETKKK</sequence>
<reference key="1">
    <citation type="journal article" date="2006" name="Nat. Biotechnol.">
        <title>Complete genome of the mutualistic, N2-fixing grass endophyte Azoarcus sp. strain BH72.</title>
        <authorList>
            <person name="Krause A."/>
            <person name="Ramakumar A."/>
            <person name="Bartels D."/>
            <person name="Battistoni F."/>
            <person name="Bekel T."/>
            <person name="Boch J."/>
            <person name="Boehm M."/>
            <person name="Friedrich F."/>
            <person name="Hurek T."/>
            <person name="Krause L."/>
            <person name="Linke B."/>
            <person name="McHardy A.C."/>
            <person name="Sarkar A."/>
            <person name="Schneiker S."/>
            <person name="Syed A.A."/>
            <person name="Thauer R."/>
            <person name="Vorhoelter F.-J."/>
            <person name="Weidner S."/>
            <person name="Puehler A."/>
            <person name="Reinhold-Hurek B."/>
            <person name="Kaiser O."/>
            <person name="Goesmann A."/>
        </authorList>
    </citation>
    <scope>NUCLEOTIDE SEQUENCE [LARGE SCALE GENOMIC DNA]</scope>
    <source>
        <strain>BH72</strain>
    </source>
</reference>
<protein>
    <recommendedName>
        <fullName evidence="1">Large ribosomal subunit protein uL6</fullName>
    </recommendedName>
    <alternativeName>
        <fullName evidence="2">50S ribosomal protein L6</fullName>
    </alternativeName>
</protein>
<dbReference type="EMBL" id="AM406670">
    <property type="protein sequence ID" value="CAL96018.1"/>
    <property type="molecule type" value="Genomic_DNA"/>
</dbReference>
<dbReference type="RefSeq" id="WP_011767125.1">
    <property type="nucleotide sequence ID" value="NC_008702.1"/>
</dbReference>
<dbReference type="SMR" id="A1KB12"/>
<dbReference type="STRING" id="62928.azo3402"/>
<dbReference type="KEGG" id="azo:azo3402"/>
<dbReference type="eggNOG" id="COG0097">
    <property type="taxonomic scope" value="Bacteria"/>
</dbReference>
<dbReference type="HOGENOM" id="CLU_065464_1_2_4"/>
<dbReference type="Proteomes" id="UP000002588">
    <property type="component" value="Chromosome"/>
</dbReference>
<dbReference type="GO" id="GO:0022625">
    <property type="term" value="C:cytosolic large ribosomal subunit"/>
    <property type="evidence" value="ECO:0007669"/>
    <property type="project" value="TreeGrafter"/>
</dbReference>
<dbReference type="GO" id="GO:0019843">
    <property type="term" value="F:rRNA binding"/>
    <property type="evidence" value="ECO:0007669"/>
    <property type="project" value="UniProtKB-UniRule"/>
</dbReference>
<dbReference type="GO" id="GO:0003735">
    <property type="term" value="F:structural constituent of ribosome"/>
    <property type="evidence" value="ECO:0007669"/>
    <property type="project" value="InterPro"/>
</dbReference>
<dbReference type="GO" id="GO:0002181">
    <property type="term" value="P:cytoplasmic translation"/>
    <property type="evidence" value="ECO:0007669"/>
    <property type="project" value="TreeGrafter"/>
</dbReference>
<dbReference type="FunFam" id="3.90.930.12:FF:000001">
    <property type="entry name" value="50S ribosomal protein L6"/>
    <property type="match status" value="1"/>
</dbReference>
<dbReference type="FunFam" id="3.90.930.12:FF:000002">
    <property type="entry name" value="50S ribosomal protein L6"/>
    <property type="match status" value="1"/>
</dbReference>
<dbReference type="Gene3D" id="3.90.930.12">
    <property type="entry name" value="Ribosomal protein L6, alpha-beta domain"/>
    <property type="match status" value="2"/>
</dbReference>
<dbReference type="HAMAP" id="MF_01365_B">
    <property type="entry name" value="Ribosomal_uL6_B"/>
    <property type="match status" value="1"/>
</dbReference>
<dbReference type="InterPro" id="IPR000702">
    <property type="entry name" value="Ribosomal_uL6-like"/>
</dbReference>
<dbReference type="InterPro" id="IPR036789">
    <property type="entry name" value="Ribosomal_uL6-like_a/b-dom_sf"/>
</dbReference>
<dbReference type="InterPro" id="IPR020040">
    <property type="entry name" value="Ribosomal_uL6_a/b-dom"/>
</dbReference>
<dbReference type="InterPro" id="IPR019906">
    <property type="entry name" value="Ribosomal_uL6_bac-type"/>
</dbReference>
<dbReference type="InterPro" id="IPR002358">
    <property type="entry name" value="Ribosomal_uL6_CS"/>
</dbReference>
<dbReference type="NCBIfam" id="TIGR03654">
    <property type="entry name" value="L6_bact"/>
    <property type="match status" value="1"/>
</dbReference>
<dbReference type="PANTHER" id="PTHR11655">
    <property type="entry name" value="60S/50S RIBOSOMAL PROTEIN L6/L9"/>
    <property type="match status" value="1"/>
</dbReference>
<dbReference type="PANTHER" id="PTHR11655:SF14">
    <property type="entry name" value="LARGE RIBOSOMAL SUBUNIT PROTEIN UL6M"/>
    <property type="match status" value="1"/>
</dbReference>
<dbReference type="Pfam" id="PF00347">
    <property type="entry name" value="Ribosomal_L6"/>
    <property type="match status" value="2"/>
</dbReference>
<dbReference type="PIRSF" id="PIRSF002162">
    <property type="entry name" value="Ribosomal_L6"/>
    <property type="match status" value="1"/>
</dbReference>
<dbReference type="PRINTS" id="PR00059">
    <property type="entry name" value="RIBOSOMALL6"/>
</dbReference>
<dbReference type="SUPFAM" id="SSF56053">
    <property type="entry name" value="Ribosomal protein L6"/>
    <property type="match status" value="2"/>
</dbReference>
<dbReference type="PROSITE" id="PS00525">
    <property type="entry name" value="RIBOSOMAL_L6_1"/>
    <property type="match status" value="1"/>
</dbReference>
<gene>
    <name evidence="1" type="primary">rplF</name>
    <name type="ordered locus">azo3402</name>
</gene>
<organism>
    <name type="scientific">Azoarcus sp. (strain BH72)</name>
    <dbReference type="NCBI Taxonomy" id="418699"/>
    <lineage>
        <taxon>Bacteria</taxon>
        <taxon>Pseudomonadati</taxon>
        <taxon>Pseudomonadota</taxon>
        <taxon>Betaproteobacteria</taxon>
        <taxon>Rhodocyclales</taxon>
        <taxon>Zoogloeaceae</taxon>
        <taxon>Azoarcus</taxon>
    </lineage>
</organism>
<feature type="chain" id="PRO_1000055194" description="Large ribosomal subunit protein uL6">
    <location>
        <begin position="1"/>
        <end position="177"/>
    </location>
</feature>
<name>RL6_AZOSB</name>